<name>ESTR_MYCTU</name>
<gene>
    <name type="ordered locus">Rv1288</name>
    <name type="ORF">MTCY373.07</name>
</gene>
<reference key="1">
    <citation type="journal article" date="1998" name="Nature">
        <title>Deciphering the biology of Mycobacterium tuberculosis from the complete genome sequence.</title>
        <authorList>
            <person name="Cole S.T."/>
            <person name="Brosch R."/>
            <person name="Parkhill J."/>
            <person name="Garnier T."/>
            <person name="Churcher C.M."/>
            <person name="Harris D.E."/>
            <person name="Gordon S.V."/>
            <person name="Eiglmeier K."/>
            <person name="Gas S."/>
            <person name="Barry C.E. III"/>
            <person name="Tekaia F."/>
            <person name="Badcock K."/>
            <person name="Basham D."/>
            <person name="Brown D."/>
            <person name="Chillingworth T."/>
            <person name="Connor R."/>
            <person name="Davies R.M."/>
            <person name="Devlin K."/>
            <person name="Feltwell T."/>
            <person name="Gentles S."/>
            <person name="Hamlin N."/>
            <person name="Holroyd S."/>
            <person name="Hornsby T."/>
            <person name="Jagels K."/>
            <person name="Krogh A."/>
            <person name="McLean J."/>
            <person name="Moule S."/>
            <person name="Murphy L.D."/>
            <person name="Oliver S."/>
            <person name="Osborne J."/>
            <person name="Quail M.A."/>
            <person name="Rajandream M.A."/>
            <person name="Rogers J."/>
            <person name="Rutter S."/>
            <person name="Seeger K."/>
            <person name="Skelton S."/>
            <person name="Squares S."/>
            <person name="Squares R."/>
            <person name="Sulston J.E."/>
            <person name="Taylor K."/>
            <person name="Whitehead S."/>
            <person name="Barrell B.G."/>
        </authorList>
    </citation>
    <scope>NUCLEOTIDE SEQUENCE [LARGE SCALE GENOMIC DNA]</scope>
    <source>
        <strain>ATCC 25618 / H37Rv</strain>
    </source>
</reference>
<reference key="2">
    <citation type="journal article" date="2011" name="Mol. Cell. Proteomics">
        <title>Proteogenomic analysis of Mycobacterium tuberculosis by high resolution mass spectrometry.</title>
        <authorList>
            <person name="Kelkar D.S."/>
            <person name="Kumar D."/>
            <person name="Kumar P."/>
            <person name="Balakrishnan L."/>
            <person name="Muthusamy B."/>
            <person name="Yadav A.K."/>
            <person name="Shrivastava P."/>
            <person name="Marimuthu A."/>
            <person name="Anand S."/>
            <person name="Sundaram H."/>
            <person name="Kingsbury R."/>
            <person name="Harsha H.C."/>
            <person name="Nair B."/>
            <person name="Prasad T.S."/>
            <person name="Chauhan D.S."/>
            <person name="Katoch K."/>
            <person name="Katoch V.M."/>
            <person name="Kumar P."/>
            <person name="Chaerkady R."/>
            <person name="Ramachandran S."/>
            <person name="Dash D."/>
            <person name="Pandey A."/>
        </authorList>
    </citation>
    <scope>IDENTIFICATION BY MASS SPECTROMETRY [LARGE SCALE ANALYSIS]</scope>
    <source>
        <strain>ATCC 25618 / H37Rv</strain>
    </source>
</reference>
<reference key="3">
    <citation type="journal article" date="2018" name="Front. Cell. Infect. Microbiol.">
        <title>Rv1288, a two domain, cell wall anchored, nutrient stress inducible carboxyl-esterase of Mycobacterium tuberculosis, modulates cell wall lipid.</title>
        <authorList>
            <person name="Maan P."/>
            <person name="Kumar A."/>
            <person name="Kaur J."/>
            <person name="Kaur J."/>
        </authorList>
    </citation>
    <scope>FUNCTION</scope>
    <scope>CATALYTIC ACTIVITY</scope>
    <scope>BIOPHYSICOCHEMICAL PROPERTIES</scope>
    <scope>SUBCELLULAR LOCATION</scope>
    <scope>INDUCTION</scope>
    <scope>DOMAIN</scope>
    <scope>OVEREXPRESSION IN M.SMEGMATIS</scope>
    <scope>MUTAGENESIS OF SER-294; ASP-391 AND HIS-425</scope>
    <scope>ACTIVE SITE</scope>
</reference>
<protein>
    <recommendedName>
        <fullName evidence="3">Esterase Rv1288</fullName>
        <ecNumber evidence="2">3.1.1.-</ecNumber>
    </recommendedName>
</protein>
<sequence length="456" mass="49619">MVSTHAVVAGETLSALALRFYGDAELYRLIAAASGIADPDVVNVGQRLIMPDFTRYTVVAGDTLSALALRFYGDAELNWLIAAASGIADPDVVNVGQRLIMPDFTRYTVVAGDTLSALAARFYGDASLYPLIAAVNGIADPGVIDVGQVLVIFIGRSDGFGLRIVDRNENDPRLWYYRFQTSAIGWNPGVNVLLPDDYRTSGRTYPVLYLFHGGGTDQDFRTFDFLGIRDLTAGKPIIIVMPDGGHAGWYSNPVSSFVGPRNWETFHIAQLLPWIEANFRTYAEYDGRAVAGFSMGGFGALKYAAKYYGHFASASSHSGPASLRRDFGLVVHWANLSSAVLDLGGGTVYGAPLWDQARVSADNPVERIDSYRNKRIFLVAGTSPDPANWFDSVNETQVLAGQREFRERLSNAGIPHESHEVPGGHVFRPDMFRLDLDGIVARLRPASIGAAAERAD</sequence>
<keyword id="KW-0134">Cell wall</keyword>
<keyword id="KW-0378">Hydrolase</keyword>
<keyword id="KW-0443">Lipid metabolism</keyword>
<keyword id="KW-1185">Reference proteome</keyword>
<keyword id="KW-0677">Repeat</keyword>
<keyword id="KW-0964">Secreted</keyword>
<keyword id="KW-0719">Serine esterase</keyword>
<proteinExistence type="evidence at protein level"/>
<organism>
    <name type="scientific">Mycobacterium tuberculosis (strain ATCC 25618 / H37Rv)</name>
    <dbReference type="NCBI Taxonomy" id="83332"/>
    <lineage>
        <taxon>Bacteria</taxon>
        <taxon>Bacillati</taxon>
        <taxon>Actinomycetota</taxon>
        <taxon>Actinomycetes</taxon>
        <taxon>Mycobacteriales</taxon>
        <taxon>Mycobacteriaceae</taxon>
        <taxon>Mycobacterium</taxon>
        <taxon>Mycobacterium tuberculosis complex</taxon>
    </lineage>
</organism>
<accession>P9WM39</accession>
<accession>L0T8Y0</accession>
<accession>Q10614</accession>
<comment type="function">
    <text evidence="2">Exhibits lipolytic activity with medium chain length esters as optimum substrates (PubMed:30560095). In vitro, pNP-caprylate (C8) is the optimum substrate followed by pNP-capricate (C10) (PubMed:30560095). May modulate the cell wall lipids to favor the survival of bacteria under stress conditions (PubMed:30560095).</text>
</comment>
<comment type="catalytic activity">
    <reaction evidence="2">
        <text>a fatty acid ester + H2O = an aliphatic alcohol + a fatty acid + H(+)</text>
        <dbReference type="Rhea" id="RHEA:59388"/>
        <dbReference type="ChEBI" id="CHEBI:2571"/>
        <dbReference type="ChEBI" id="CHEBI:15377"/>
        <dbReference type="ChEBI" id="CHEBI:15378"/>
        <dbReference type="ChEBI" id="CHEBI:28868"/>
        <dbReference type="ChEBI" id="CHEBI:35748"/>
    </reaction>
</comment>
<comment type="catalytic activity">
    <reaction evidence="2">
        <text>an octanoate ester + H2O = an aliphatic alcohol + octanoate + H(+)</text>
        <dbReference type="Rhea" id="RHEA:47356"/>
        <dbReference type="ChEBI" id="CHEBI:2571"/>
        <dbReference type="ChEBI" id="CHEBI:15377"/>
        <dbReference type="ChEBI" id="CHEBI:15378"/>
        <dbReference type="ChEBI" id="CHEBI:25646"/>
        <dbReference type="ChEBI" id="CHEBI:87657"/>
    </reaction>
</comment>
<comment type="catalytic activity">
    <reaction evidence="2">
        <text>decanoate ester + H2O = decanoate + an aliphatic alcohol + H(+)</text>
        <dbReference type="Rhea" id="RHEA:47360"/>
        <dbReference type="ChEBI" id="CHEBI:2571"/>
        <dbReference type="ChEBI" id="CHEBI:15377"/>
        <dbReference type="ChEBI" id="CHEBI:15378"/>
        <dbReference type="ChEBI" id="CHEBI:27689"/>
        <dbReference type="ChEBI" id="CHEBI:87658"/>
    </reaction>
</comment>
<comment type="catalytic activity">
    <reaction evidence="2">
        <text>a dodecanoate ester + H2O = an aliphatic alcohol + dodecanoate + H(+)</text>
        <dbReference type="Rhea" id="RHEA:47364"/>
        <dbReference type="ChEBI" id="CHEBI:2571"/>
        <dbReference type="ChEBI" id="CHEBI:15377"/>
        <dbReference type="ChEBI" id="CHEBI:15378"/>
        <dbReference type="ChEBI" id="CHEBI:18262"/>
        <dbReference type="ChEBI" id="CHEBI:87659"/>
    </reaction>
</comment>
<comment type="catalytic activity">
    <reaction evidence="2">
        <text>a butanoate ester + H2O = an aliphatic alcohol + butanoate + H(+)</text>
        <dbReference type="Rhea" id="RHEA:47348"/>
        <dbReference type="ChEBI" id="CHEBI:2571"/>
        <dbReference type="ChEBI" id="CHEBI:15377"/>
        <dbReference type="ChEBI" id="CHEBI:15378"/>
        <dbReference type="ChEBI" id="CHEBI:17968"/>
        <dbReference type="ChEBI" id="CHEBI:50477"/>
    </reaction>
</comment>
<comment type="catalytic activity">
    <reaction evidence="2">
        <text>an acetyl ester + H2O = an aliphatic alcohol + acetate + H(+)</text>
        <dbReference type="Rhea" id="RHEA:12957"/>
        <dbReference type="ChEBI" id="CHEBI:2571"/>
        <dbReference type="ChEBI" id="CHEBI:15377"/>
        <dbReference type="ChEBI" id="CHEBI:15378"/>
        <dbReference type="ChEBI" id="CHEBI:30089"/>
        <dbReference type="ChEBI" id="CHEBI:47622"/>
    </reaction>
</comment>
<comment type="catalytic activity">
    <reaction evidence="2">
        <text>a tetradecanoate ester + H2O = an aliphatic alcohol + tetradecanoate + H(+)</text>
        <dbReference type="Rhea" id="RHEA:47388"/>
        <dbReference type="ChEBI" id="CHEBI:2571"/>
        <dbReference type="ChEBI" id="CHEBI:15377"/>
        <dbReference type="ChEBI" id="CHEBI:15378"/>
        <dbReference type="ChEBI" id="CHEBI:30807"/>
        <dbReference type="ChEBI" id="CHEBI:87691"/>
    </reaction>
</comment>
<comment type="biophysicochemical properties">
    <kinetics>
        <KM evidence="2">77 uM for pNP-caprylate</KM>
        <text evidence="2">kcat is 2 min(-1) with pNP-caprylate as substrate.</text>
    </kinetics>
    <phDependence>
        <text evidence="2">Optimum pH is 9.0.</text>
    </phDependence>
    <temperatureDependence>
        <text evidence="2">Optimum temperature is 45 degrees Celsius.</text>
    </temperatureDependence>
</comment>
<comment type="subcellular location">
    <subcellularLocation>
        <location evidence="2">Secreted</location>
        <location evidence="2">Cell wall</location>
    </subcellularLocation>
    <text evidence="2">Cell wall anchored. Binds peptidoglycans via the LytM domains.</text>
</comment>
<comment type="induction">
    <text evidence="2">Expression is up-regulated under nutrient depletion condition.</text>
</comment>
<comment type="domain">
    <text evidence="2">Contains an N-terminal LytE region, which consists of three consecutive LysM domains, and a C-terminal esterase domain. LytM domains are essential for anchoring protein to the cell wall. The presence of LytM domains results in enhanced rate of protein aggregation at higher temperature.</text>
</comment>
<comment type="miscellaneous">
    <text evidence="2">Overexpression in M.smegmatis leads to change in colony morphology, enhanced pellicle and aggregate formation, which may be linked with the changed lipid composition of the cell wall. Cell wall has higher amount of lipids, with a significant increase in trehalose dimycolate content. Overexpression also leads to increased drug resistance and enhanced intracellular survival inside the macrophage cell line.</text>
</comment>
<comment type="similarity">
    <text evidence="3">Belongs to the AB hydrolase superfamily.</text>
</comment>
<evidence type="ECO:0000255" key="1">
    <source>
        <dbReference type="PROSITE-ProRule" id="PRU01118"/>
    </source>
</evidence>
<evidence type="ECO:0000269" key="2">
    <source>
    </source>
</evidence>
<evidence type="ECO:0000305" key="3"/>
<evidence type="ECO:0000305" key="4">
    <source>
    </source>
</evidence>
<feature type="chain" id="PRO_0000103786" description="Esterase Rv1288">
    <location>
        <begin position="1"/>
        <end position="456"/>
    </location>
</feature>
<feature type="domain" description="LysM 1" evidence="1">
    <location>
        <begin position="3"/>
        <end position="50"/>
    </location>
</feature>
<feature type="domain" description="LysM 2" evidence="1">
    <location>
        <begin position="54"/>
        <end position="101"/>
    </location>
</feature>
<feature type="domain" description="LysM 3" evidence="1">
    <location>
        <begin position="105"/>
        <end position="152"/>
    </location>
</feature>
<feature type="active site" evidence="4">
    <location>
        <position position="294"/>
    </location>
</feature>
<feature type="active site" evidence="4">
    <location>
        <position position="391"/>
    </location>
</feature>
<feature type="active site" evidence="4">
    <location>
        <position position="425"/>
    </location>
</feature>
<feature type="mutagenesis site" description="Complete loss of activity." evidence="2">
    <original>S</original>
    <variation>A</variation>
    <location>
        <position position="294"/>
    </location>
</feature>
<feature type="mutagenesis site" description="85% reduction of activity." evidence="2">
    <original>D</original>
    <variation>A</variation>
    <location>
        <position position="391"/>
    </location>
</feature>
<feature type="mutagenesis site" description="Complete loss of activity." evidence="2">
    <original>H</original>
    <variation>A</variation>
    <location>
        <position position="425"/>
    </location>
</feature>
<dbReference type="EC" id="3.1.1.-" evidence="2"/>
<dbReference type="EMBL" id="AL123456">
    <property type="protein sequence ID" value="CCP44044.1"/>
    <property type="molecule type" value="Genomic_DNA"/>
</dbReference>
<dbReference type="PIR" id="D70772">
    <property type="entry name" value="D70772"/>
</dbReference>
<dbReference type="RefSeq" id="NP_215804.1">
    <property type="nucleotide sequence ID" value="NC_000962.3"/>
</dbReference>
<dbReference type="RefSeq" id="WP_003406625.1">
    <property type="nucleotide sequence ID" value="NZ_NVQJ01000030.1"/>
</dbReference>
<dbReference type="SMR" id="P9WM39"/>
<dbReference type="STRING" id="83332.Rv1288"/>
<dbReference type="SwissLipids" id="SLP:000001945"/>
<dbReference type="ESTHER" id="myctu-yc88">
    <property type="family name" value="A85-Mycolyl-transferase"/>
</dbReference>
<dbReference type="PaxDb" id="83332-Rv1288"/>
<dbReference type="DNASU" id="886974"/>
<dbReference type="GeneID" id="886974"/>
<dbReference type="KEGG" id="mtu:Rv1288"/>
<dbReference type="KEGG" id="mtv:RVBD_1288"/>
<dbReference type="TubercuList" id="Rv1288"/>
<dbReference type="eggNOG" id="COG0627">
    <property type="taxonomic scope" value="Bacteria"/>
</dbReference>
<dbReference type="eggNOG" id="COG1388">
    <property type="taxonomic scope" value="Bacteria"/>
</dbReference>
<dbReference type="InParanoid" id="P9WM39"/>
<dbReference type="OrthoDB" id="4527292at2"/>
<dbReference type="Proteomes" id="UP000001584">
    <property type="component" value="Chromosome"/>
</dbReference>
<dbReference type="GO" id="GO:0005576">
    <property type="term" value="C:extracellular region"/>
    <property type="evidence" value="ECO:0007669"/>
    <property type="project" value="UniProtKB-KW"/>
</dbReference>
<dbReference type="GO" id="GO:0008126">
    <property type="term" value="F:acetylesterase activity"/>
    <property type="evidence" value="ECO:0007669"/>
    <property type="project" value="RHEA"/>
</dbReference>
<dbReference type="GO" id="GO:0016747">
    <property type="term" value="F:acyltransferase activity, transferring groups other than amino-acyl groups"/>
    <property type="evidence" value="ECO:0000318"/>
    <property type="project" value="GO_Central"/>
</dbReference>
<dbReference type="GO" id="GO:0006629">
    <property type="term" value="P:lipid metabolic process"/>
    <property type="evidence" value="ECO:0007669"/>
    <property type="project" value="UniProtKB-KW"/>
</dbReference>
<dbReference type="CDD" id="cd00118">
    <property type="entry name" value="LysM"/>
    <property type="match status" value="2"/>
</dbReference>
<dbReference type="FunFam" id="3.40.50.1820:FF:000198">
    <property type="entry name" value="Putative esterase"/>
    <property type="match status" value="1"/>
</dbReference>
<dbReference type="Gene3D" id="3.40.50.1820">
    <property type="entry name" value="alpha/beta hydrolase"/>
    <property type="match status" value="1"/>
</dbReference>
<dbReference type="Gene3D" id="3.10.350.10">
    <property type="entry name" value="LysM domain"/>
    <property type="match status" value="3"/>
</dbReference>
<dbReference type="InterPro" id="IPR029058">
    <property type="entry name" value="AB_hydrolase_fold"/>
</dbReference>
<dbReference type="InterPro" id="IPR000801">
    <property type="entry name" value="Esterase-like"/>
</dbReference>
<dbReference type="InterPro" id="IPR018392">
    <property type="entry name" value="LysM_dom"/>
</dbReference>
<dbReference type="InterPro" id="IPR036779">
    <property type="entry name" value="LysM_dom_sf"/>
</dbReference>
<dbReference type="InterPro" id="IPR050583">
    <property type="entry name" value="Mycobacterial_A85_antigen"/>
</dbReference>
<dbReference type="PANTHER" id="PTHR48098:SF1">
    <property type="entry name" value="DIACYLGLYCEROL ACYLTRANSFERASE_MYCOLYLTRANSFERASE AG85A"/>
    <property type="match status" value="1"/>
</dbReference>
<dbReference type="PANTHER" id="PTHR48098">
    <property type="entry name" value="ENTEROCHELIN ESTERASE-RELATED"/>
    <property type="match status" value="1"/>
</dbReference>
<dbReference type="Pfam" id="PF00756">
    <property type="entry name" value="Esterase"/>
    <property type="match status" value="1"/>
</dbReference>
<dbReference type="Pfam" id="PF01476">
    <property type="entry name" value="LysM"/>
    <property type="match status" value="3"/>
</dbReference>
<dbReference type="SMART" id="SM00257">
    <property type="entry name" value="LysM"/>
    <property type="match status" value="3"/>
</dbReference>
<dbReference type="SUPFAM" id="SSF53474">
    <property type="entry name" value="alpha/beta-Hydrolases"/>
    <property type="match status" value="1"/>
</dbReference>
<dbReference type="SUPFAM" id="SSF54106">
    <property type="entry name" value="LysM domain"/>
    <property type="match status" value="1"/>
</dbReference>
<dbReference type="PROSITE" id="PS51782">
    <property type="entry name" value="LYSM"/>
    <property type="match status" value="3"/>
</dbReference>